<accession>P31548</accession>
<accession>P75635</accession>
<accession>Q6IU29</accession>
<proteinExistence type="evidence at protein level"/>
<name>THIQ_ECOLI</name>
<protein>
    <recommendedName>
        <fullName evidence="1">Thiamine import ATP-binding protein ThiQ</fullName>
        <ecNumber evidence="1">7.6.2.15</ecNumber>
    </recommendedName>
</protein>
<organism>
    <name type="scientific">Escherichia coli (strain K12)</name>
    <dbReference type="NCBI Taxonomy" id="83333"/>
    <lineage>
        <taxon>Bacteria</taxon>
        <taxon>Pseudomonadati</taxon>
        <taxon>Pseudomonadota</taxon>
        <taxon>Gammaproteobacteria</taxon>
        <taxon>Enterobacterales</taxon>
        <taxon>Enterobacteriaceae</taxon>
        <taxon>Escherichia</taxon>
    </lineage>
</organism>
<feature type="chain" id="PRO_0000093022" description="Thiamine import ATP-binding protein ThiQ">
    <location>
        <begin position="1"/>
        <end position="232"/>
    </location>
</feature>
<feature type="domain" description="ABC transporter" evidence="1">
    <location>
        <begin position="2"/>
        <end position="230"/>
    </location>
</feature>
<feature type="binding site" evidence="1">
    <location>
        <begin position="32"/>
        <end position="39"/>
    </location>
    <ligand>
        <name>ATP</name>
        <dbReference type="ChEBI" id="CHEBI:30616"/>
    </ligand>
</feature>
<feature type="sequence conflict" description="In Ref. 4; AAT42474." evidence="3" ref="4">
    <original>M</original>
    <variation>T</variation>
    <location>
        <position position="66"/>
    </location>
</feature>
<feature type="sequence conflict" description="In Ref. 4; AAT42474." evidence="3" ref="4">
    <original>V</original>
    <variation>A</variation>
    <location>
        <position position="105"/>
    </location>
</feature>
<feature type="sequence conflict" description="In Ref. 4; AAT42474." evidence="3" ref="4">
    <original>G</original>
    <variation>E</variation>
    <location>
        <position position="108"/>
    </location>
</feature>
<feature type="sequence conflict" description="In Ref. 4; AAT42474." evidence="3" ref="4">
    <original>M</original>
    <variation>K</variation>
    <location>
        <position position="213"/>
    </location>
</feature>
<gene>
    <name evidence="1" type="primary">thiQ</name>
    <name type="synonym">yabJ</name>
    <name type="ordered locus">b0066</name>
    <name type="ordered locus">JW0065</name>
</gene>
<sequence>MLKLTDITWLYHHLPMRFSLTVERGEQVAILGPSGAGKSTLLNLIAGFLTPASGSLTIDGVDHTTMPPSRRPVSMLFQENNLFSHLTVAQNIGLGLNPGLKLNAVQQGKMHAIARQMGIDNLMARLPGELSGGQRQRVALARCLVREQPILLLDEPFSALDPALRQEMLTLVSTSCQQQKMTLLMVSHSVEDAARIATRSVVVADGRIAWQGMTNELLSGKASASALLGITG</sequence>
<keyword id="KW-0067">ATP-binding</keyword>
<keyword id="KW-0997">Cell inner membrane</keyword>
<keyword id="KW-1003">Cell membrane</keyword>
<keyword id="KW-0472">Membrane</keyword>
<keyword id="KW-0547">Nucleotide-binding</keyword>
<keyword id="KW-1185">Reference proteome</keyword>
<keyword id="KW-1278">Translocase</keyword>
<keyword id="KW-0813">Transport</keyword>
<comment type="function">
    <text evidence="2 3">Part of the ABC transporter complex ThiBPQ involved in thiamine import (PubMed:12175925). Responsible for energy coupling to the transport system (Probable).</text>
</comment>
<comment type="catalytic activity">
    <reaction evidence="1">
        <text>thiamine(out) + ATP + H2O = thiamine(in) + ADP + phosphate + H(+)</text>
        <dbReference type="Rhea" id="RHEA:29811"/>
        <dbReference type="ChEBI" id="CHEBI:15377"/>
        <dbReference type="ChEBI" id="CHEBI:15378"/>
        <dbReference type="ChEBI" id="CHEBI:18385"/>
        <dbReference type="ChEBI" id="CHEBI:30616"/>
        <dbReference type="ChEBI" id="CHEBI:43474"/>
        <dbReference type="ChEBI" id="CHEBI:456216"/>
        <dbReference type="EC" id="7.6.2.15"/>
    </reaction>
</comment>
<comment type="subunit">
    <text evidence="1">The complex is composed of two ATP-binding proteins (ThiQ), two transmembrane proteins (ThiP) and a solute-binding protein (ThiB).</text>
</comment>
<comment type="subcellular location">
    <subcellularLocation>
        <location evidence="1">Cell inner membrane</location>
        <topology evidence="1">Peripheral membrane protein</topology>
    </subcellularLocation>
</comment>
<comment type="similarity">
    <text evidence="1">Belongs to the ABC transporter superfamily. Thiamine importer (TC 3.A.1.19.1) family.</text>
</comment>
<evidence type="ECO:0000255" key="1">
    <source>
        <dbReference type="HAMAP-Rule" id="MF_01723"/>
    </source>
</evidence>
<evidence type="ECO:0000269" key="2">
    <source>
    </source>
</evidence>
<evidence type="ECO:0000305" key="3"/>
<reference key="1">
    <citation type="journal article" date="1992" name="Nucleic Acids Res.">
        <title>Systematic sequencing of the Escherichia coli genome: analysis of the 0-2.4 min region.</title>
        <authorList>
            <person name="Yura T."/>
            <person name="Mori H."/>
            <person name="Nagai H."/>
            <person name="Nagata T."/>
            <person name="Ishihama A."/>
            <person name="Fujita N."/>
            <person name="Isono K."/>
            <person name="Mizobuchi K."/>
            <person name="Nakata A."/>
        </authorList>
    </citation>
    <scope>NUCLEOTIDE SEQUENCE [LARGE SCALE GENOMIC DNA]</scope>
    <source>
        <strain>K12</strain>
    </source>
</reference>
<reference key="2">
    <citation type="journal article" date="1997" name="Science">
        <title>The complete genome sequence of Escherichia coli K-12.</title>
        <authorList>
            <person name="Blattner F.R."/>
            <person name="Plunkett G. III"/>
            <person name="Bloch C.A."/>
            <person name="Perna N.T."/>
            <person name="Burland V."/>
            <person name="Riley M."/>
            <person name="Collado-Vides J."/>
            <person name="Glasner J.D."/>
            <person name="Rode C.K."/>
            <person name="Mayhew G.F."/>
            <person name="Gregor J."/>
            <person name="Davis N.W."/>
            <person name="Kirkpatrick H.A."/>
            <person name="Goeden M.A."/>
            <person name="Rose D.J."/>
            <person name="Mau B."/>
            <person name="Shao Y."/>
        </authorList>
    </citation>
    <scope>NUCLEOTIDE SEQUENCE [LARGE SCALE GENOMIC DNA]</scope>
    <source>
        <strain>K12 / MG1655 / ATCC 47076</strain>
    </source>
</reference>
<reference key="3">
    <citation type="journal article" date="2006" name="Mol. Syst. Biol.">
        <title>Highly accurate genome sequences of Escherichia coli K-12 strains MG1655 and W3110.</title>
        <authorList>
            <person name="Hayashi K."/>
            <person name="Morooka N."/>
            <person name="Yamamoto Y."/>
            <person name="Fujita K."/>
            <person name="Isono K."/>
            <person name="Choi S."/>
            <person name="Ohtsubo E."/>
            <person name="Baba T."/>
            <person name="Wanner B.L."/>
            <person name="Mori H."/>
            <person name="Horiuchi T."/>
        </authorList>
    </citation>
    <scope>NUCLEOTIDE SEQUENCE [LARGE SCALE GENOMIC DNA]</scope>
    <scope>SEQUENCE REVISION TO 156</scope>
    <source>
        <strain>K12 / W3110 / ATCC 27325 / DSM 5911</strain>
    </source>
</reference>
<reference key="4">
    <citation type="journal article" date="2003" name="J. Mol. Evol.">
        <title>Rates of DNA sequence evolution in experimental populations of Escherichia coli during 20,000 generations.</title>
        <authorList>
            <person name="Lenski R.E."/>
            <person name="Winkworth C.L."/>
            <person name="Riley M.A."/>
        </authorList>
    </citation>
    <scope>NUCLEOTIDE SEQUENCE [GENOMIC DNA] OF 51-214</scope>
    <source>
        <strain>B / Bc251</strain>
    </source>
</reference>
<reference key="5">
    <citation type="journal article" date="2002" name="Biochim. Biophys. Acta">
        <title>Thiamine transport in Escherichia coli: the mechanism of inhibition by the sulfhydryl-specific modifier N-ethylmaleimide.</title>
        <authorList>
            <person name="Hollenbach A.D."/>
            <person name="Dickson K.A."/>
            <person name="Washabaugh M.W."/>
        </authorList>
    </citation>
    <scope>FUNCTION IN THIAMINE TRANSPORT</scope>
    <source>
        <strain>K12 / KG33</strain>
    </source>
</reference>
<dbReference type="EC" id="7.6.2.15" evidence="1"/>
<dbReference type="EMBL" id="U00096">
    <property type="protein sequence ID" value="AAC73177.1"/>
    <property type="molecule type" value="Genomic_DNA"/>
</dbReference>
<dbReference type="EMBL" id="AP009048">
    <property type="protein sequence ID" value="BAB96635.2"/>
    <property type="molecule type" value="Genomic_DNA"/>
</dbReference>
<dbReference type="EMBL" id="AY625120">
    <property type="protein sequence ID" value="AAT42474.1"/>
    <property type="molecule type" value="Genomic_DNA"/>
</dbReference>
<dbReference type="PIR" id="B64728">
    <property type="entry name" value="B64728"/>
</dbReference>
<dbReference type="RefSeq" id="NP_414608.1">
    <property type="nucleotide sequence ID" value="NC_000913.3"/>
</dbReference>
<dbReference type="RefSeq" id="WP_000916281.1">
    <property type="nucleotide sequence ID" value="NZ_STEB01000010.1"/>
</dbReference>
<dbReference type="SMR" id="P31548"/>
<dbReference type="BioGRID" id="4259729">
    <property type="interactions" value="11"/>
</dbReference>
<dbReference type="ComplexPortal" id="CPX-4387">
    <property type="entry name" value="Thiamine ABC transporter complex"/>
</dbReference>
<dbReference type="FunCoup" id="P31548">
    <property type="interactions" value="257"/>
</dbReference>
<dbReference type="IntAct" id="P31548">
    <property type="interactions" value="6"/>
</dbReference>
<dbReference type="STRING" id="511145.b0066"/>
<dbReference type="TCDB" id="3.A.1.19.1">
    <property type="family name" value="the atp-binding cassette (abc) superfamily"/>
</dbReference>
<dbReference type="jPOST" id="P31548"/>
<dbReference type="PaxDb" id="511145-b0066"/>
<dbReference type="EnsemblBacteria" id="AAC73177">
    <property type="protein sequence ID" value="AAC73177"/>
    <property type="gene ID" value="b0066"/>
</dbReference>
<dbReference type="GeneID" id="944785"/>
<dbReference type="KEGG" id="ecj:JW0065"/>
<dbReference type="KEGG" id="eco:b0066"/>
<dbReference type="PATRIC" id="fig|1411691.4.peg.2216"/>
<dbReference type="EchoBASE" id="EB1532"/>
<dbReference type="eggNOG" id="COG3840">
    <property type="taxonomic scope" value="Bacteria"/>
</dbReference>
<dbReference type="HOGENOM" id="CLU_000604_1_22_6"/>
<dbReference type="InParanoid" id="P31548"/>
<dbReference type="OMA" id="FNRFAHD"/>
<dbReference type="OrthoDB" id="9802264at2"/>
<dbReference type="PhylomeDB" id="P31548"/>
<dbReference type="BioCyc" id="EcoCyc:SFUC-MONOMER"/>
<dbReference type="BioCyc" id="MetaCyc:SFUC-MONOMER"/>
<dbReference type="PRO" id="PR:P31548"/>
<dbReference type="Proteomes" id="UP000000625">
    <property type="component" value="Chromosome"/>
</dbReference>
<dbReference type="GO" id="GO:0055052">
    <property type="term" value="C:ATP-binding cassette (ABC) transporter complex, substrate-binding subunit-containing"/>
    <property type="evidence" value="ECO:0000303"/>
    <property type="project" value="ComplexPortal"/>
</dbReference>
<dbReference type="GO" id="GO:0016020">
    <property type="term" value="C:membrane"/>
    <property type="evidence" value="ECO:0000303"/>
    <property type="project" value="ComplexPortal"/>
</dbReference>
<dbReference type="GO" id="GO:0048502">
    <property type="term" value="F:ABC-type thiamine transporter activity"/>
    <property type="evidence" value="ECO:0007669"/>
    <property type="project" value="UniProtKB-EC"/>
</dbReference>
<dbReference type="GO" id="GO:0005524">
    <property type="term" value="F:ATP binding"/>
    <property type="evidence" value="ECO:0000255"/>
    <property type="project" value="EcoCyc"/>
</dbReference>
<dbReference type="GO" id="GO:0016887">
    <property type="term" value="F:ATP hydrolysis activity"/>
    <property type="evidence" value="ECO:0007669"/>
    <property type="project" value="InterPro"/>
</dbReference>
<dbReference type="GO" id="GO:0015234">
    <property type="term" value="F:thiamine transmembrane transporter activity"/>
    <property type="evidence" value="ECO:0000266"/>
    <property type="project" value="EcoCyc"/>
</dbReference>
<dbReference type="GO" id="GO:0071934">
    <property type="term" value="P:thiamine transmembrane transport"/>
    <property type="evidence" value="ECO:0000266"/>
    <property type="project" value="EcoCyc"/>
</dbReference>
<dbReference type="CDD" id="cd03298">
    <property type="entry name" value="ABC_ThiQ_thiamine_transporter"/>
    <property type="match status" value="1"/>
</dbReference>
<dbReference type="FunFam" id="3.40.50.300:FF:001071">
    <property type="entry name" value="Thiamine import ATP-binding protein ThiQ"/>
    <property type="match status" value="1"/>
</dbReference>
<dbReference type="Gene3D" id="3.40.50.300">
    <property type="entry name" value="P-loop containing nucleotide triphosphate hydrolases"/>
    <property type="match status" value="1"/>
</dbReference>
<dbReference type="InterPro" id="IPR003593">
    <property type="entry name" value="AAA+_ATPase"/>
</dbReference>
<dbReference type="InterPro" id="IPR050093">
    <property type="entry name" value="ABC_SmlMolc_Importer"/>
</dbReference>
<dbReference type="InterPro" id="IPR003439">
    <property type="entry name" value="ABC_transporter-like_ATP-bd"/>
</dbReference>
<dbReference type="InterPro" id="IPR017871">
    <property type="entry name" value="ABC_transporter-like_CS"/>
</dbReference>
<dbReference type="InterPro" id="IPR027417">
    <property type="entry name" value="P-loop_NTPase"/>
</dbReference>
<dbReference type="InterPro" id="IPR005968">
    <property type="entry name" value="Thiamine_ABC_ThiQ"/>
</dbReference>
<dbReference type="NCBIfam" id="NF008039">
    <property type="entry name" value="PRK10771.1"/>
    <property type="match status" value="1"/>
</dbReference>
<dbReference type="NCBIfam" id="TIGR01277">
    <property type="entry name" value="thiQ"/>
    <property type="match status" value="1"/>
</dbReference>
<dbReference type="PANTHER" id="PTHR42781">
    <property type="entry name" value="SPERMIDINE/PUTRESCINE IMPORT ATP-BINDING PROTEIN POTA"/>
    <property type="match status" value="1"/>
</dbReference>
<dbReference type="PANTHER" id="PTHR42781:SF1">
    <property type="entry name" value="THIAMINE IMPORT ATP-BINDING PROTEIN THIQ"/>
    <property type="match status" value="1"/>
</dbReference>
<dbReference type="Pfam" id="PF00005">
    <property type="entry name" value="ABC_tran"/>
    <property type="match status" value="1"/>
</dbReference>
<dbReference type="SMART" id="SM00382">
    <property type="entry name" value="AAA"/>
    <property type="match status" value="1"/>
</dbReference>
<dbReference type="SUPFAM" id="SSF52540">
    <property type="entry name" value="P-loop containing nucleoside triphosphate hydrolases"/>
    <property type="match status" value="1"/>
</dbReference>
<dbReference type="PROSITE" id="PS00211">
    <property type="entry name" value="ABC_TRANSPORTER_1"/>
    <property type="match status" value="1"/>
</dbReference>
<dbReference type="PROSITE" id="PS50893">
    <property type="entry name" value="ABC_TRANSPORTER_2"/>
    <property type="match status" value="1"/>
</dbReference>
<dbReference type="PROSITE" id="PS51288">
    <property type="entry name" value="THIQ"/>
    <property type="match status" value="1"/>
</dbReference>